<accession>A5G0K5</accession>
<protein>
    <recommendedName>
        <fullName evidence="1">Acetyl-coenzyme A carboxylase carboxyl transferase subunit alpha</fullName>
        <shortName evidence="1">ACCase subunit alpha</shortName>
        <shortName evidence="1">Acetyl-CoA carboxylase carboxyltransferase subunit alpha</shortName>
        <ecNumber evidence="1">2.1.3.15</ecNumber>
    </recommendedName>
</protein>
<proteinExistence type="inferred from homology"/>
<keyword id="KW-0067">ATP-binding</keyword>
<keyword id="KW-0963">Cytoplasm</keyword>
<keyword id="KW-0275">Fatty acid biosynthesis</keyword>
<keyword id="KW-0276">Fatty acid metabolism</keyword>
<keyword id="KW-0444">Lipid biosynthesis</keyword>
<keyword id="KW-0443">Lipid metabolism</keyword>
<keyword id="KW-0547">Nucleotide-binding</keyword>
<keyword id="KW-1185">Reference proteome</keyword>
<keyword id="KW-0808">Transferase</keyword>
<sequence length="318" mass="34106">MRHFLDFEKPVAELEAKIEELRRMTDPGELNIAEEVTLLSDKAERQLRTLYGRLSPWQKTQVARHPERPKARDVIAGLITEFTPLAGDRGFGEDAAIVAGPGRFKGEPVMVIAIEKGWDLESRLKHNFGSPRPEGYRKARRLIEMAGRFGLPVLSFVDTSGAYPGVDAEARGQAEAIARGIDACLAAPVPFIATIIGEGGSGGAIAIAAADTVLMFEHAIYSVISPEGCAAILWEDRANAAQAAEAMKITAQDLKRLGIIDRIVPEPLGGAHRDPQAAITALGAAIAETLPGLAALAPEALRAKRREKFLAIGQTLPV</sequence>
<name>ACCA_ACICJ</name>
<gene>
    <name evidence="1" type="primary">accA</name>
    <name type="ordered locus">Acry_2189</name>
</gene>
<feature type="chain" id="PRO_1000072877" description="Acetyl-coenzyme A carboxylase carboxyl transferase subunit alpha">
    <location>
        <begin position="1"/>
        <end position="318"/>
    </location>
</feature>
<feature type="domain" description="CoA carboxyltransferase C-terminal" evidence="2">
    <location>
        <begin position="39"/>
        <end position="292"/>
    </location>
</feature>
<dbReference type="EC" id="2.1.3.15" evidence="1"/>
<dbReference type="EMBL" id="CP000697">
    <property type="protein sequence ID" value="ABQ31387.1"/>
    <property type="molecule type" value="Genomic_DNA"/>
</dbReference>
<dbReference type="RefSeq" id="WP_007423469.1">
    <property type="nucleotide sequence ID" value="NC_009484.1"/>
</dbReference>
<dbReference type="SMR" id="A5G0K5"/>
<dbReference type="STRING" id="349163.Acry_2189"/>
<dbReference type="KEGG" id="acr:Acry_2189"/>
<dbReference type="eggNOG" id="COG0825">
    <property type="taxonomic scope" value="Bacteria"/>
</dbReference>
<dbReference type="HOGENOM" id="CLU_015486_0_2_5"/>
<dbReference type="UniPathway" id="UPA00655">
    <property type="reaction ID" value="UER00711"/>
</dbReference>
<dbReference type="Proteomes" id="UP000000245">
    <property type="component" value="Chromosome"/>
</dbReference>
<dbReference type="GO" id="GO:0009317">
    <property type="term" value="C:acetyl-CoA carboxylase complex"/>
    <property type="evidence" value="ECO:0007669"/>
    <property type="project" value="InterPro"/>
</dbReference>
<dbReference type="GO" id="GO:0003989">
    <property type="term" value="F:acetyl-CoA carboxylase activity"/>
    <property type="evidence" value="ECO:0007669"/>
    <property type="project" value="InterPro"/>
</dbReference>
<dbReference type="GO" id="GO:0005524">
    <property type="term" value="F:ATP binding"/>
    <property type="evidence" value="ECO:0007669"/>
    <property type="project" value="UniProtKB-KW"/>
</dbReference>
<dbReference type="GO" id="GO:0016743">
    <property type="term" value="F:carboxyl- or carbamoyltransferase activity"/>
    <property type="evidence" value="ECO:0007669"/>
    <property type="project" value="UniProtKB-UniRule"/>
</dbReference>
<dbReference type="GO" id="GO:0006633">
    <property type="term" value="P:fatty acid biosynthetic process"/>
    <property type="evidence" value="ECO:0007669"/>
    <property type="project" value="UniProtKB-KW"/>
</dbReference>
<dbReference type="GO" id="GO:2001295">
    <property type="term" value="P:malonyl-CoA biosynthetic process"/>
    <property type="evidence" value="ECO:0007669"/>
    <property type="project" value="UniProtKB-UniRule"/>
</dbReference>
<dbReference type="Gene3D" id="3.90.226.10">
    <property type="entry name" value="2-enoyl-CoA Hydratase, Chain A, domain 1"/>
    <property type="match status" value="1"/>
</dbReference>
<dbReference type="HAMAP" id="MF_00823">
    <property type="entry name" value="AcetylCoA_CT_alpha"/>
    <property type="match status" value="1"/>
</dbReference>
<dbReference type="InterPro" id="IPR001095">
    <property type="entry name" value="Acetyl_CoA_COase_a_su"/>
</dbReference>
<dbReference type="InterPro" id="IPR029045">
    <property type="entry name" value="ClpP/crotonase-like_dom_sf"/>
</dbReference>
<dbReference type="InterPro" id="IPR011763">
    <property type="entry name" value="COA_CT_C"/>
</dbReference>
<dbReference type="NCBIfam" id="TIGR00513">
    <property type="entry name" value="accA"/>
    <property type="match status" value="1"/>
</dbReference>
<dbReference type="NCBIfam" id="NF041504">
    <property type="entry name" value="AccA_sub"/>
    <property type="match status" value="1"/>
</dbReference>
<dbReference type="NCBIfam" id="NF004344">
    <property type="entry name" value="PRK05724.1"/>
    <property type="match status" value="1"/>
</dbReference>
<dbReference type="PANTHER" id="PTHR42853">
    <property type="entry name" value="ACETYL-COENZYME A CARBOXYLASE CARBOXYL TRANSFERASE SUBUNIT ALPHA"/>
    <property type="match status" value="1"/>
</dbReference>
<dbReference type="PANTHER" id="PTHR42853:SF3">
    <property type="entry name" value="ACETYL-COENZYME A CARBOXYLASE CARBOXYL TRANSFERASE SUBUNIT ALPHA, CHLOROPLASTIC"/>
    <property type="match status" value="1"/>
</dbReference>
<dbReference type="Pfam" id="PF03255">
    <property type="entry name" value="ACCA"/>
    <property type="match status" value="1"/>
</dbReference>
<dbReference type="PRINTS" id="PR01069">
    <property type="entry name" value="ACCCTRFRASEA"/>
</dbReference>
<dbReference type="SUPFAM" id="SSF52096">
    <property type="entry name" value="ClpP/crotonase"/>
    <property type="match status" value="1"/>
</dbReference>
<dbReference type="PROSITE" id="PS50989">
    <property type="entry name" value="COA_CT_CTER"/>
    <property type="match status" value="1"/>
</dbReference>
<organism>
    <name type="scientific">Acidiphilium cryptum (strain JF-5)</name>
    <dbReference type="NCBI Taxonomy" id="349163"/>
    <lineage>
        <taxon>Bacteria</taxon>
        <taxon>Pseudomonadati</taxon>
        <taxon>Pseudomonadota</taxon>
        <taxon>Alphaproteobacteria</taxon>
        <taxon>Acetobacterales</taxon>
        <taxon>Acidocellaceae</taxon>
        <taxon>Acidiphilium</taxon>
    </lineage>
</organism>
<reference key="1">
    <citation type="submission" date="2007-05" db="EMBL/GenBank/DDBJ databases">
        <title>Complete sequence of chromosome of Acidiphilium cryptum JF-5.</title>
        <authorList>
            <consortium name="US DOE Joint Genome Institute"/>
            <person name="Copeland A."/>
            <person name="Lucas S."/>
            <person name="Lapidus A."/>
            <person name="Barry K."/>
            <person name="Detter J.C."/>
            <person name="Glavina del Rio T."/>
            <person name="Hammon N."/>
            <person name="Israni S."/>
            <person name="Dalin E."/>
            <person name="Tice H."/>
            <person name="Pitluck S."/>
            <person name="Sims D."/>
            <person name="Brettin T."/>
            <person name="Bruce D."/>
            <person name="Han C."/>
            <person name="Schmutz J."/>
            <person name="Larimer F."/>
            <person name="Land M."/>
            <person name="Hauser L."/>
            <person name="Kyrpides N."/>
            <person name="Kim E."/>
            <person name="Magnuson T."/>
            <person name="Richardson P."/>
        </authorList>
    </citation>
    <scope>NUCLEOTIDE SEQUENCE [LARGE SCALE GENOMIC DNA]</scope>
    <source>
        <strain>JF-5</strain>
    </source>
</reference>
<evidence type="ECO:0000255" key="1">
    <source>
        <dbReference type="HAMAP-Rule" id="MF_00823"/>
    </source>
</evidence>
<evidence type="ECO:0000255" key="2">
    <source>
        <dbReference type="PROSITE-ProRule" id="PRU01137"/>
    </source>
</evidence>
<comment type="function">
    <text evidence="1">Component of the acetyl coenzyme A carboxylase (ACC) complex. First, biotin carboxylase catalyzes the carboxylation of biotin on its carrier protein (BCCP) and then the CO(2) group is transferred by the carboxyltransferase to acetyl-CoA to form malonyl-CoA.</text>
</comment>
<comment type="catalytic activity">
    <reaction evidence="1">
        <text>N(6)-carboxybiotinyl-L-lysyl-[protein] + acetyl-CoA = N(6)-biotinyl-L-lysyl-[protein] + malonyl-CoA</text>
        <dbReference type="Rhea" id="RHEA:54728"/>
        <dbReference type="Rhea" id="RHEA-COMP:10505"/>
        <dbReference type="Rhea" id="RHEA-COMP:10506"/>
        <dbReference type="ChEBI" id="CHEBI:57288"/>
        <dbReference type="ChEBI" id="CHEBI:57384"/>
        <dbReference type="ChEBI" id="CHEBI:83144"/>
        <dbReference type="ChEBI" id="CHEBI:83145"/>
        <dbReference type="EC" id="2.1.3.15"/>
    </reaction>
</comment>
<comment type="pathway">
    <text evidence="1">Lipid metabolism; malonyl-CoA biosynthesis; malonyl-CoA from acetyl-CoA: step 1/1.</text>
</comment>
<comment type="subunit">
    <text evidence="1">Acetyl-CoA carboxylase is a heterohexamer composed of biotin carboxyl carrier protein (AccB), biotin carboxylase (AccC) and two subunits each of ACCase subunit alpha (AccA) and ACCase subunit beta (AccD).</text>
</comment>
<comment type="subcellular location">
    <subcellularLocation>
        <location evidence="1">Cytoplasm</location>
    </subcellularLocation>
</comment>
<comment type="similarity">
    <text evidence="1">Belongs to the AccA family.</text>
</comment>